<proteinExistence type="inferred from homology"/>
<comment type="function">
    <text evidence="1">Catalyzes the oxidation of either pyridoxine 5'-phosphate (PNP) or pyridoxamine 5'-phosphate (PMP) into pyridoxal 5'-phosphate (PLP).</text>
</comment>
<comment type="catalytic activity">
    <reaction evidence="1">
        <text>pyridoxamine 5'-phosphate + O2 + H2O = pyridoxal 5'-phosphate + H2O2 + NH4(+)</text>
        <dbReference type="Rhea" id="RHEA:15817"/>
        <dbReference type="ChEBI" id="CHEBI:15377"/>
        <dbReference type="ChEBI" id="CHEBI:15379"/>
        <dbReference type="ChEBI" id="CHEBI:16240"/>
        <dbReference type="ChEBI" id="CHEBI:28938"/>
        <dbReference type="ChEBI" id="CHEBI:58451"/>
        <dbReference type="ChEBI" id="CHEBI:597326"/>
        <dbReference type="EC" id="1.4.3.5"/>
    </reaction>
</comment>
<comment type="catalytic activity">
    <reaction evidence="1">
        <text>pyridoxine 5'-phosphate + O2 = pyridoxal 5'-phosphate + H2O2</text>
        <dbReference type="Rhea" id="RHEA:15149"/>
        <dbReference type="ChEBI" id="CHEBI:15379"/>
        <dbReference type="ChEBI" id="CHEBI:16240"/>
        <dbReference type="ChEBI" id="CHEBI:58589"/>
        <dbReference type="ChEBI" id="CHEBI:597326"/>
        <dbReference type="EC" id="1.4.3.5"/>
    </reaction>
</comment>
<comment type="cofactor">
    <cofactor evidence="1">
        <name>FMN</name>
        <dbReference type="ChEBI" id="CHEBI:58210"/>
    </cofactor>
    <text evidence="1">Binds 1 FMN per subunit.</text>
</comment>
<comment type="pathway">
    <text evidence="1">Cofactor metabolism; pyridoxal 5'-phosphate salvage; pyridoxal 5'-phosphate from pyridoxamine 5'-phosphate: step 1/1.</text>
</comment>
<comment type="pathway">
    <text evidence="1">Cofactor metabolism; pyridoxal 5'-phosphate salvage; pyridoxal 5'-phosphate from pyridoxine 5'-phosphate: step 1/1.</text>
</comment>
<comment type="subunit">
    <text evidence="1">Homodimer.</text>
</comment>
<comment type="similarity">
    <text evidence="1">Belongs to the pyridoxamine 5'-phosphate oxidase family.</text>
</comment>
<protein>
    <recommendedName>
        <fullName evidence="1">Pyridoxine/pyridoxamine 5'-phosphate oxidase</fullName>
        <ecNumber evidence="1">1.4.3.5</ecNumber>
    </recommendedName>
    <alternativeName>
        <fullName evidence="1">PNP/PMP oxidase</fullName>
        <shortName evidence="1">PNPOx</shortName>
    </alternativeName>
    <alternativeName>
        <fullName evidence="1">Pyridoxal 5'-phosphate synthase</fullName>
    </alternativeName>
</protein>
<feature type="chain" id="PRO_1000069683" description="Pyridoxine/pyridoxamine 5'-phosphate oxidase">
    <location>
        <begin position="1"/>
        <end position="208"/>
    </location>
</feature>
<feature type="binding site" evidence="1">
    <location>
        <begin position="55"/>
        <end position="60"/>
    </location>
    <ligand>
        <name>FMN</name>
        <dbReference type="ChEBI" id="CHEBI:58210"/>
    </ligand>
</feature>
<feature type="binding site" evidence="1">
    <location>
        <position position="60"/>
    </location>
    <ligand>
        <name>substrate</name>
    </ligand>
</feature>
<feature type="binding site" evidence="1">
    <location>
        <begin position="70"/>
        <end position="71"/>
    </location>
    <ligand>
        <name>FMN</name>
        <dbReference type="ChEBI" id="CHEBI:58210"/>
    </ligand>
</feature>
<feature type="binding site" evidence="1">
    <location>
        <position position="76"/>
    </location>
    <ligand>
        <name>FMN</name>
        <dbReference type="ChEBI" id="CHEBI:58210"/>
    </ligand>
</feature>
<feature type="binding site" evidence="1">
    <location>
        <position position="77"/>
    </location>
    <ligand>
        <name>FMN</name>
        <dbReference type="ChEBI" id="CHEBI:58210"/>
    </ligand>
</feature>
<feature type="binding site" evidence="1">
    <location>
        <position position="99"/>
    </location>
    <ligand>
        <name>FMN</name>
        <dbReference type="ChEBI" id="CHEBI:58210"/>
    </ligand>
</feature>
<feature type="binding site" evidence="1">
    <location>
        <position position="117"/>
    </location>
    <ligand>
        <name>substrate</name>
    </ligand>
</feature>
<feature type="binding site" evidence="1">
    <location>
        <position position="121"/>
    </location>
    <ligand>
        <name>substrate</name>
    </ligand>
</feature>
<feature type="binding site" evidence="1">
    <location>
        <position position="125"/>
    </location>
    <ligand>
        <name>substrate</name>
    </ligand>
</feature>
<feature type="binding site" evidence="1">
    <location>
        <begin position="134"/>
        <end position="135"/>
    </location>
    <ligand>
        <name>FMN</name>
        <dbReference type="ChEBI" id="CHEBI:58210"/>
    </ligand>
</feature>
<feature type="binding site" evidence="1">
    <location>
        <position position="179"/>
    </location>
    <ligand>
        <name>FMN</name>
        <dbReference type="ChEBI" id="CHEBI:58210"/>
    </ligand>
</feature>
<feature type="binding site" evidence="1">
    <location>
        <begin position="185"/>
        <end position="187"/>
    </location>
    <ligand>
        <name>substrate</name>
    </ligand>
</feature>
<feature type="binding site" evidence="1">
    <location>
        <position position="189"/>
    </location>
    <ligand>
        <name>FMN</name>
        <dbReference type="ChEBI" id="CHEBI:58210"/>
    </ligand>
</feature>
<accession>A5VNZ1</accession>
<evidence type="ECO:0000255" key="1">
    <source>
        <dbReference type="HAMAP-Rule" id="MF_01629"/>
    </source>
</evidence>
<dbReference type="EC" id="1.4.3.5" evidence="1"/>
<dbReference type="EMBL" id="CP000708">
    <property type="protein sequence ID" value="ABQ60142.1"/>
    <property type="molecule type" value="Genomic_DNA"/>
</dbReference>
<dbReference type="SMR" id="A5VNZ1"/>
<dbReference type="KEGG" id="bov:BOV_0424"/>
<dbReference type="HOGENOM" id="CLU_032263_2_3_5"/>
<dbReference type="UniPathway" id="UPA01068">
    <property type="reaction ID" value="UER00304"/>
</dbReference>
<dbReference type="UniPathway" id="UPA01068">
    <property type="reaction ID" value="UER00305"/>
</dbReference>
<dbReference type="Proteomes" id="UP000006383">
    <property type="component" value="Chromosome I"/>
</dbReference>
<dbReference type="GO" id="GO:0010181">
    <property type="term" value="F:FMN binding"/>
    <property type="evidence" value="ECO:0007669"/>
    <property type="project" value="UniProtKB-UniRule"/>
</dbReference>
<dbReference type="GO" id="GO:0004733">
    <property type="term" value="F:pyridoxamine phosphate oxidase activity"/>
    <property type="evidence" value="ECO:0007669"/>
    <property type="project" value="UniProtKB-UniRule"/>
</dbReference>
<dbReference type="GO" id="GO:0008615">
    <property type="term" value="P:pyridoxine biosynthetic process"/>
    <property type="evidence" value="ECO:0007669"/>
    <property type="project" value="UniProtKB-KW"/>
</dbReference>
<dbReference type="Gene3D" id="2.30.110.10">
    <property type="entry name" value="Electron Transport, Fmn-binding Protein, Chain A"/>
    <property type="match status" value="1"/>
</dbReference>
<dbReference type="HAMAP" id="MF_01629">
    <property type="entry name" value="PdxH"/>
    <property type="match status" value="1"/>
</dbReference>
<dbReference type="InterPro" id="IPR000659">
    <property type="entry name" value="Pyridox_Oxase"/>
</dbReference>
<dbReference type="InterPro" id="IPR019740">
    <property type="entry name" value="Pyridox_Oxase_CS"/>
</dbReference>
<dbReference type="InterPro" id="IPR011576">
    <property type="entry name" value="Pyridox_Oxase_N"/>
</dbReference>
<dbReference type="InterPro" id="IPR019576">
    <property type="entry name" value="Pyridoxamine_oxidase_dimer_C"/>
</dbReference>
<dbReference type="InterPro" id="IPR012349">
    <property type="entry name" value="Split_barrel_FMN-bd"/>
</dbReference>
<dbReference type="NCBIfam" id="TIGR00558">
    <property type="entry name" value="pdxH"/>
    <property type="match status" value="1"/>
</dbReference>
<dbReference type="NCBIfam" id="NF004231">
    <property type="entry name" value="PRK05679.1"/>
    <property type="match status" value="1"/>
</dbReference>
<dbReference type="PANTHER" id="PTHR10851:SF0">
    <property type="entry name" value="PYRIDOXINE-5'-PHOSPHATE OXIDASE"/>
    <property type="match status" value="1"/>
</dbReference>
<dbReference type="PANTHER" id="PTHR10851">
    <property type="entry name" value="PYRIDOXINE-5-PHOSPHATE OXIDASE"/>
    <property type="match status" value="1"/>
</dbReference>
<dbReference type="Pfam" id="PF10590">
    <property type="entry name" value="PNP_phzG_C"/>
    <property type="match status" value="1"/>
</dbReference>
<dbReference type="Pfam" id="PF01243">
    <property type="entry name" value="PNPOx_N"/>
    <property type="match status" value="1"/>
</dbReference>
<dbReference type="PIRSF" id="PIRSF000190">
    <property type="entry name" value="Pyd_amn-ph_oxd"/>
    <property type="match status" value="1"/>
</dbReference>
<dbReference type="SUPFAM" id="SSF50475">
    <property type="entry name" value="FMN-binding split barrel"/>
    <property type="match status" value="1"/>
</dbReference>
<dbReference type="PROSITE" id="PS01064">
    <property type="entry name" value="PYRIDOX_OXIDASE"/>
    <property type="match status" value="1"/>
</dbReference>
<reference key="1">
    <citation type="journal article" date="2009" name="PLoS ONE">
        <title>Genome degradation in Brucella ovis corresponds with narrowing of its host range and tissue tropism.</title>
        <authorList>
            <person name="Tsolis R.M."/>
            <person name="Seshadri R."/>
            <person name="Santos R.L."/>
            <person name="Sangari F.J."/>
            <person name="Lobo J.M."/>
            <person name="de Jong M.F."/>
            <person name="Ren Q."/>
            <person name="Myers G."/>
            <person name="Brinkac L.M."/>
            <person name="Nelson W.C."/>
            <person name="Deboy R.T."/>
            <person name="Angiuoli S."/>
            <person name="Khouri H."/>
            <person name="Dimitrov G."/>
            <person name="Robinson J.R."/>
            <person name="Mulligan S."/>
            <person name="Walker R.L."/>
            <person name="Elzer P.E."/>
            <person name="Hassan K.A."/>
            <person name="Paulsen I.T."/>
        </authorList>
    </citation>
    <scope>NUCLEOTIDE SEQUENCE [LARGE SCALE GENOMIC DNA]</scope>
    <source>
        <strain>ATCC 25840 / 63/290 / NCTC 10512</strain>
    </source>
</reference>
<keyword id="KW-0285">Flavoprotein</keyword>
<keyword id="KW-0288">FMN</keyword>
<keyword id="KW-0560">Oxidoreductase</keyword>
<keyword id="KW-0664">Pyridoxine biosynthesis</keyword>
<name>PDXH_BRUO2</name>
<organism>
    <name type="scientific">Brucella ovis (strain ATCC 25840 / 63/290 / NCTC 10512)</name>
    <dbReference type="NCBI Taxonomy" id="444178"/>
    <lineage>
        <taxon>Bacteria</taxon>
        <taxon>Pseudomonadati</taxon>
        <taxon>Pseudomonadota</taxon>
        <taxon>Alphaproteobacteria</taxon>
        <taxon>Hyphomicrobiales</taxon>
        <taxon>Brucellaceae</taxon>
        <taxon>Brucella/Ochrobactrum group</taxon>
        <taxon>Brucella</taxon>
    </lineage>
</organism>
<gene>
    <name evidence="1" type="primary">pdxH</name>
    <name type="ordered locus">BOV_0424</name>
</gene>
<sequence length="208" mass="23865">MEPVKMTNSSDDFTQSAEPFKLFAEWLADAAKSEPNDPNAVALATVDPDGLPNVRMVLLKDFDETGFVFYTNYESKKGQEILSAEKAAMCFHWKSLRRQVRVRGPVEKVSDAEANAYYASRPRGSRIGAWASKQSRPLESRFALEKAVAEYTAKYAIGDIPRPPYWSGFRIRPVSIEFWHDRPFRLHDRVLFTRPTPEGDWNKDRLYP</sequence>